<dbReference type="EC" id="2.1.1.177" evidence="1"/>
<dbReference type="EMBL" id="CP000614">
    <property type="protein sequence ID" value="ABO55383.1"/>
    <property type="molecule type" value="Genomic_DNA"/>
</dbReference>
<dbReference type="SMR" id="A4JGI0"/>
<dbReference type="KEGG" id="bvi:Bcep1808_2384"/>
<dbReference type="eggNOG" id="COG1576">
    <property type="taxonomic scope" value="Bacteria"/>
</dbReference>
<dbReference type="HOGENOM" id="CLU_100552_1_0_4"/>
<dbReference type="Proteomes" id="UP000002287">
    <property type="component" value="Chromosome 1"/>
</dbReference>
<dbReference type="GO" id="GO:0005737">
    <property type="term" value="C:cytoplasm"/>
    <property type="evidence" value="ECO:0007669"/>
    <property type="project" value="UniProtKB-SubCell"/>
</dbReference>
<dbReference type="GO" id="GO:0070038">
    <property type="term" value="F:rRNA (pseudouridine-N3-)-methyltransferase activity"/>
    <property type="evidence" value="ECO:0007669"/>
    <property type="project" value="UniProtKB-UniRule"/>
</dbReference>
<dbReference type="CDD" id="cd18081">
    <property type="entry name" value="RlmH-like"/>
    <property type="match status" value="1"/>
</dbReference>
<dbReference type="Gene3D" id="3.40.1280.10">
    <property type="match status" value="1"/>
</dbReference>
<dbReference type="HAMAP" id="MF_00658">
    <property type="entry name" value="23SrRNA_methyltr_H"/>
    <property type="match status" value="1"/>
</dbReference>
<dbReference type="InterPro" id="IPR029028">
    <property type="entry name" value="Alpha/beta_knot_MTases"/>
</dbReference>
<dbReference type="InterPro" id="IPR003742">
    <property type="entry name" value="RlmH-like"/>
</dbReference>
<dbReference type="InterPro" id="IPR029026">
    <property type="entry name" value="tRNA_m1G_MTases_N"/>
</dbReference>
<dbReference type="NCBIfam" id="NF000986">
    <property type="entry name" value="PRK00103.1-4"/>
    <property type="match status" value="1"/>
</dbReference>
<dbReference type="NCBIfam" id="TIGR00246">
    <property type="entry name" value="tRNA_RlmH_YbeA"/>
    <property type="match status" value="1"/>
</dbReference>
<dbReference type="PANTHER" id="PTHR33603">
    <property type="entry name" value="METHYLTRANSFERASE"/>
    <property type="match status" value="1"/>
</dbReference>
<dbReference type="PANTHER" id="PTHR33603:SF1">
    <property type="entry name" value="RIBOSOMAL RNA LARGE SUBUNIT METHYLTRANSFERASE H"/>
    <property type="match status" value="1"/>
</dbReference>
<dbReference type="Pfam" id="PF02590">
    <property type="entry name" value="SPOUT_MTase"/>
    <property type="match status" value="1"/>
</dbReference>
<dbReference type="PIRSF" id="PIRSF004505">
    <property type="entry name" value="MT_bac"/>
    <property type="match status" value="1"/>
</dbReference>
<dbReference type="SUPFAM" id="SSF75217">
    <property type="entry name" value="alpha/beta knot"/>
    <property type="match status" value="1"/>
</dbReference>
<comment type="function">
    <text evidence="1">Specifically methylates the pseudouridine at position 1915 (m3Psi1915) in 23S rRNA.</text>
</comment>
<comment type="catalytic activity">
    <reaction evidence="1">
        <text>pseudouridine(1915) in 23S rRNA + S-adenosyl-L-methionine = N(3)-methylpseudouridine(1915) in 23S rRNA + S-adenosyl-L-homocysteine + H(+)</text>
        <dbReference type="Rhea" id="RHEA:42752"/>
        <dbReference type="Rhea" id="RHEA-COMP:10221"/>
        <dbReference type="Rhea" id="RHEA-COMP:10222"/>
        <dbReference type="ChEBI" id="CHEBI:15378"/>
        <dbReference type="ChEBI" id="CHEBI:57856"/>
        <dbReference type="ChEBI" id="CHEBI:59789"/>
        <dbReference type="ChEBI" id="CHEBI:65314"/>
        <dbReference type="ChEBI" id="CHEBI:74486"/>
        <dbReference type="EC" id="2.1.1.177"/>
    </reaction>
</comment>
<comment type="subunit">
    <text evidence="1">Homodimer.</text>
</comment>
<comment type="subcellular location">
    <subcellularLocation>
        <location evidence="1">Cytoplasm</location>
    </subcellularLocation>
</comment>
<comment type="similarity">
    <text evidence="1">Belongs to the RNA methyltransferase RlmH family.</text>
</comment>
<feature type="chain" id="PRO_1000061769" description="Ribosomal RNA large subunit methyltransferase H">
    <location>
        <begin position="1"/>
        <end position="156"/>
    </location>
</feature>
<feature type="binding site" evidence="1">
    <location>
        <position position="73"/>
    </location>
    <ligand>
        <name>S-adenosyl-L-methionine</name>
        <dbReference type="ChEBI" id="CHEBI:59789"/>
    </ligand>
</feature>
<feature type="binding site" evidence="1">
    <location>
        <position position="104"/>
    </location>
    <ligand>
        <name>S-adenosyl-L-methionine</name>
        <dbReference type="ChEBI" id="CHEBI:59789"/>
    </ligand>
</feature>
<feature type="binding site" evidence="1">
    <location>
        <begin position="123"/>
        <end position="128"/>
    </location>
    <ligand>
        <name>S-adenosyl-L-methionine</name>
        <dbReference type="ChEBI" id="CHEBI:59789"/>
    </ligand>
</feature>
<protein>
    <recommendedName>
        <fullName evidence="1">Ribosomal RNA large subunit methyltransferase H</fullName>
        <ecNumber evidence="1">2.1.1.177</ecNumber>
    </recommendedName>
    <alternativeName>
        <fullName evidence="1">23S rRNA (pseudouridine1915-N3)-methyltransferase</fullName>
    </alternativeName>
    <alternativeName>
        <fullName evidence="1">23S rRNA m3Psi1915 methyltransferase</fullName>
    </alternativeName>
    <alternativeName>
        <fullName evidence="1">rRNA (pseudouridine-N3-)-methyltransferase RlmH</fullName>
    </alternativeName>
</protein>
<accession>A4JGI0</accession>
<organism>
    <name type="scientific">Burkholderia vietnamiensis (strain G4 / LMG 22486)</name>
    <name type="common">Burkholderia cepacia (strain R1808)</name>
    <dbReference type="NCBI Taxonomy" id="269482"/>
    <lineage>
        <taxon>Bacteria</taxon>
        <taxon>Pseudomonadati</taxon>
        <taxon>Pseudomonadota</taxon>
        <taxon>Betaproteobacteria</taxon>
        <taxon>Burkholderiales</taxon>
        <taxon>Burkholderiaceae</taxon>
        <taxon>Burkholderia</taxon>
        <taxon>Burkholderia cepacia complex</taxon>
    </lineage>
</organism>
<gene>
    <name evidence="1" type="primary">rlmH</name>
    <name type="ordered locus">Bcep1808_2384</name>
</gene>
<reference key="1">
    <citation type="submission" date="2007-03" db="EMBL/GenBank/DDBJ databases">
        <title>Complete sequence of chromosome 1 of Burkholderia vietnamiensis G4.</title>
        <authorList>
            <consortium name="US DOE Joint Genome Institute"/>
            <person name="Copeland A."/>
            <person name="Lucas S."/>
            <person name="Lapidus A."/>
            <person name="Barry K."/>
            <person name="Detter J.C."/>
            <person name="Glavina del Rio T."/>
            <person name="Hammon N."/>
            <person name="Israni S."/>
            <person name="Dalin E."/>
            <person name="Tice H."/>
            <person name="Pitluck S."/>
            <person name="Chain P."/>
            <person name="Malfatti S."/>
            <person name="Shin M."/>
            <person name="Vergez L."/>
            <person name="Schmutz J."/>
            <person name="Larimer F."/>
            <person name="Land M."/>
            <person name="Hauser L."/>
            <person name="Kyrpides N."/>
            <person name="Tiedje J."/>
            <person name="Richardson P."/>
        </authorList>
    </citation>
    <scope>NUCLEOTIDE SEQUENCE [LARGE SCALE GENOMIC DNA]</scope>
    <source>
        <strain>G4 / LMG 22486</strain>
    </source>
</reference>
<evidence type="ECO:0000255" key="1">
    <source>
        <dbReference type="HAMAP-Rule" id="MF_00658"/>
    </source>
</evidence>
<sequence length="156" mass="17528">MKLYILAVGHKMPGWIASGFDEYTKRMPPELRIELREIKPELRSGGRSAESVMAAERQKIEAALPKGARIVALDERGRDWTTMQLAQALPGWQQDGRDVAFVIGGADGLDPELKARADLLLRISSMTLPHGMVRVLLAEQLYRAWSITQNHPYHRA</sequence>
<proteinExistence type="inferred from homology"/>
<keyword id="KW-0963">Cytoplasm</keyword>
<keyword id="KW-0489">Methyltransferase</keyword>
<keyword id="KW-0698">rRNA processing</keyword>
<keyword id="KW-0949">S-adenosyl-L-methionine</keyword>
<keyword id="KW-0808">Transferase</keyword>
<name>RLMH_BURVG</name>